<comment type="function">
    <text evidence="1">Binds directly to 23S ribosomal RNA and is necessary for the in vitro assembly process of the 50S ribosomal subunit. It is not involved in the protein synthesizing functions of that subunit.</text>
</comment>
<comment type="similarity">
    <text evidence="1">Belongs to the bacterial ribosomal protein bL20 family.</text>
</comment>
<accession>A1SWU2</accession>
<keyword id="KW-1185">Reference proteome</keyword>
<keyword id="KW-0687">Ribonucleoprotein</keyword>
<keyword id="KW-0689">Ribosomal protein</keyword>
<keyword id="KW-0694">RNA-binding</keyword>
<keyword id="KW-0699">rRNA-binding</keyword>
<dbReference type="EMBL" id="CP000510">
    <property type="protein sequence ID" value="ABM03957.1"/>
    <property type="molecule type" value="Genomic_DNA"/>
</dbReference>
<dbReference type="RefSeq" id="WP_011770517.1">
    <property type="nucleotide sequence ID" value="NC_008709.1"/>
</dbReference>
<dbReference type="SMR" id="A1SWU2"/>
<dbReference type="STRING" id="357804.Ping_2216"/>
<dbReference type="KEGG" id="pin:Ping_2216"/>
<dbReference type="eggNOG" id="COG0292">
    <property type="taxonomic scope" value="Bacteria"/>
</dbReference>
<dbReference type="HOGENOM" id="CLU_123265_0_1_6"/>
<dbReference type="OrthoDB" id="9808966at2"/>
<dbReference type="Proteomes" id="UP000000639">
    <property type="component" value="Chromosome"/>
</dbReference>
<dbReference type="GO" id="GO:1990904">
    <property type="term" value="C:ribonucleoprotein complex"/>
    <property type="evidence" value="ECO:0007669"/>
    <property type="project" value="UniProtKB-KW"/>
</dbReference>
<dbReference type="GO" id="GO:0005840">
    <property type="term" value="C:ribosome"/>
    <property type="evidence" value="ECO:0007669"/>
    <property type="project" value="UniProtKB-KW"/>
</dbReference>
<dbReference type="GO" id="GO:0019843">
    <property type="term" value="F:rRNA binding"/>
    <property type="evidence" value="ECO:0007669"/>
    <property type="project" value="UniProtKB-UniRule"/>
</dbReference>
<dbReference type="GO" id="GO:0003735">
    <property type="term" value="F:structural constituent of ribosome"/>
    <property type="evidence" value="ECO:0007669"/>
    <property type="project" value="InterPro"/>
</dbReference>
<dbReference type="GO" id="GO:0000027">
    <property type="term" value="P:ribosomal large subunit assembly"/>
    <property type="evidence" value="ECO:0007669"/>
    <property type="project" value="UniProtKB-UniRule"/>
</dbReference>
<dbReference type="GO" id="GO:0006412">
    <property type="term" value="P:translation"/>
    <property type="evidence" value="ECO:0007669"/>
    <property type="project" value="InterPro"/>
</dbReference>
<dbReference type="CDD" id="cd07026">
    <property type="entry name" value="Ribosomal_L20"/>
    <property type="match status" value="1"/>
</dbReference>
<dbReference type="FunFam" id="1.10.1900.20:FF:000001">
    <property type="entry name" value="50S ribosomal protein L20"/>
    <property type="match status" value="1"/>
</dbReference>
<dbReference type="Gene3D" id="6.10.160.10">
    <property type="match status" value="1"/>
</dbReference>
<dbReference type="Gene3D" id="1.10.1900.20">
    <property type="entry name" value="Ribosomal protein L20"/>
    <property type="match status" value="1"/>
</dbReference>
<dbReference type="HAMAP" id="MF_00382">
    <property type="entry name" value="Ribosomal_bL20"/>
    <property type="match status" value="1"/>
</dbReference>
<dbReference type="InterPro" id="IPR005813">
    <property type="entry name" value="Ribosomal_bL20"/>
</dbReference>
<dbReference type="InterPro" id="IPR049946">
    <property type="entry name" value="RIBOSOMAL_L20_CS"/>
</dbReference>
<dbReference type="InterPro" id="IPR035566">
    <property type="entry name" value="Ribosomal_protein_bL20_C"/>
</dbReference>
<dbReference type="NCBIfam" id="TIGR01032">
    <property type="entry name" value="rplT_bact"/>
    <property type="match status" value="1"/>
</dbReference>
<dbReference type="PANTHER" id="PTHR10986">
    <property type="entry name" value="39S RIBOSOMAL PROTEIN L20"/>
    <property type="match status" value="1"/>
</dbReference>
<dbReference type="Pfam" id="PF00453">
    <property type="entry name" value="Ribosomal_L20"/>
    <property type="match status" value="1"/>
</dbReference>
<dbReference type="PRINTS" id="PR00062">
    <property type="entry name" value="RIBOSOMALL20"/>
</dbReference>
<dbReference type="SUPFAM" id="SSF74731">
    <property type="entry name" value="Ribosomal protein L20"/>
    <property type="match status" value="1"/>
</dbReference>
<dbReference type="PROSITE" id="PS00937">
    <property type="entry name" value="RIBOSOMAL_L20"/>
    <property type="match status" value="1"/>
</dbReference>
<reference key="1">
    <citation type="journal article" date="2008" name="BMC Genomics">
        <title>Genomics of an extreme psychrophile, Psychromonas ingrahamii.</title>
        <authorList>
            <person name="Riley M."/>
            <person name="Staley J.T."/>
            <person name="Danchin A."/>
            <person name="Wang T.Z."/>
            <person name="Brettin T.S."/>
            <person name="Hauser L.J."/>
            <person name="Land M.L."/>
            <person name="Thompson L.S."/>
        </authorList>
    </citation>
    <scope>NUCLEOTIDE SEQUENCE [LARGE SCALE GENOMIC DNA]</scope>
    <source>
        <strain>DSM 17664 / CCUG 51855 / 37</strain>
    </source>
</reference>
<protein>
    <recommendedName>
        <fullName evidence="1">Large ribosomal subunit protein bL20</fullName>
    </recommendedName>
    <alternativeName>
        <fullName evidence="2">50S ribosomal protein L20</fullName>
    </alternativeName>
</protein>
<name>RL20_PSYIN</name>
<gene>
    <name evidence="1" type="primary">rplT</name>
    <name type="ordered locus">Ping_2216</name>
</gene>
<evidence type="ECO:0000255" key="1">
    <source>
        <dbReference type="HAMAP-Rule" id="MF_00382"/>
    </source>
</evidence>
<evidence type="ECO:0000305" key="2"/>
<sequence length="118" mass="13533">MPRVKRGVQARARHKKVLKQAKGYYGARSRVYRVAVQAVTKAGQYAYRDRRQRKRVFRQLWITRINAASRISGLSYSRFINGLKKASVEIDRKILADIAVFDKATFAHLVEVAKKALA</sequence>
<organism>
    <name type="scientific">Psychromonas ingrahamii (strain DSM 17664 / CCUG 51855 / 37)</name>
    <dbReference type="NCBI Taxonomy" id="357804"/>
    <lineage>
        <taxon>Bacteria</taxon>
        <taxon>Pseudomonadati</taxon>
        <taxon>Pseudomonadota</taxon>
        <taxon>Gammaproteobacteria</taxon>
        <taxon>Alteromonadales</taxon>
        <taxon>Psychromonadaceae</taxon>
        <taxon>Psychromonas</taxon>
    </lineage>
</organism>
<proteinExistence type="inferred from homology"/>
<feature type="chain" id="PRO_1000049045" description="Large ribosomal subunit protein bL20">
    <location>
        <begin position="1"/>
        <end position="118"/>
    </location>
</feature>